<proteinExistence type="evidence at transcript level"/>
<sequence length="216" mass="24394">MGTRDDEYDYLFKVVLIGDSGVGKSNLLSRFTRNEFNLESKSTIGVEFATRSIQVDGKTIKAQIWDTAGQERYRAITSAYYRGAVGALLVYDIAKHLTYENVERWLKELRDHADSNIVIMLVGNKSDLRHLRAVPTDEARAFAEKNGLSFIETSALDSTNVEAAFQTILTEIYRIVSQKQMSDRRENDMSPSNNVVPIHVPPTTENKPKVQCCQNI</sequence>
<name>RB11A_PIG</name>
<protein>
    <recommendedName>
        <fullName evidence="2">Ras-related protein Rab-11A</fullName>
        <shortName evidence="2">Rab-11</shortName>
        <ecNumber evidence="4">3.6.5.2</ecNumber>
    </recommendedName>
</protein>
<comment type="function">
    <text evidence="1 2 3">The small GTPases Rab are key regulators of intracellular membrane trafficking, from the formation of transport vesicles to their fusion with membranes. Rabs cycle between an inactive GDP-bound form and an active GTP-bound form that is able to recruit to membranes different set of downstream effectors directly responsible for vesicle formation, movement, tethering and fusion. The small Rab GTPase RAB11A regulates endocytic recycling. Forms a functional Rab11/RAB11FIP3/dynein complex that regulates the movement of peripheral sorting endosomes (SE) along microtubule tracks toward the microtubule organizing center/centrosome, generating the endosomal recycling compartment (ERC). Acts as a major regulator of membrane delivery during cytokinesis. Together with MYO5B and RAB8A participates in epithelial cell polarization. Together with Rabin8/RAB3IP, RAB8A, the exocyst complex, PARD3, PRKCI, ANXA2, CDC42 and DNMBP promotes transcytosis of PODXL to the apical membrane initiation sites (AMIS), apical surface formation and lumenogenesis. Together with MYO5B participates in CFTR trafficking to the plasma membrane and TF (Transferrin) recycling in nonpolarized cells. Required in a complex with MYO5B and RAB11FIP2 for the transport of NPC1L1 to the plasma membrane. Participates in the sorting and basolateral transport of CDH1 from the Golgi apparatus to the plasma membrane (By similarity). Regulates the recycling of FCGRT (receptor of Fc region of monomeric IgG) to basolateral membranes (By similarity). May also play a role in melanosome transport and release from melanocytes (By similarity). Promotes Rabin8/RAB3IP preciliary vesicular trafficking to mother centriole by forming a ciliary targeting complex containing Rab11, ASAP1, Rabin8/RAB3IP, RAB11FIP3 and ARF4, thereby regulating ciliogenesis initiation. On the contrary, upon LPAR1 receptor signaling pathway activation, interaction with phosphorylated WDR44 prevents Rab11-RAB3IP-RAB11FIP3 complex formation and cilia growth. Participates in the export of a subset of neosynthesized proteins through a Rab8-Rab10-Rab11-endososomal dependent export route via interaction with WDR44 (By similarity).</text>
</comment>
<comment type="catalytic activity">
    <reaction evidence="4">
        <text>GTP + H2O = GDP + phosphate + H(+)</text>
        <dbReference type="Rhea" id="RHEA:19669"/>
        <dbReference type="ChEBI" id="CHEBI:15377"/>
        <dbReference type="ChEBI" id="CHEBI:15378"/>
        <dbReference type="ChEBI" id="CHEBI:37565"/>
        <dbReference type="ChEBI" id="CHEBI:43474"/>
        <dbReference type="ChEBI" id="CHEBI:58189"/>
        <dbReference type="EC" id="3.6.5.2"/>
    </reaction>
    <physiologicalReaction direction="left-to-right" evidence="4">
        <dbReference type="Rhea" id="RHEA:19670"/>
    </physiologicalReaction>
</comment>
<comment type="cofactor">
    <cofactor evidence="2">
        <name>Mg(2+)</name>
        <dbReference type="ChEBI" id="CHEBI:18420"/>
    </cofactor>
</comment>
<comment type="activity regulation">
    <text evidence="8">Regulated by guanine nucleotide exchange factors (GEFs) which promote the exchange of bound GDP for free GTP. Regulated by GTPase activating proteins (GAPs) which increase the GTP hydrolysis activity. Inhibited by GDP dissociation inhibitors (GDIs) which prevent Rab-GDP dissociation.</text>
</comment>
<comment type="subunit">
    <text evidence="2 3 5">Interacts (GTP-bound form) with RAB11FIPs (via their C-termini) including RAB11FIP1, RAB11FIP2, RAB11FIP3, RAB11FIP4 and RAB11FIP5 effectors (By similarity). Forms a complex with RAB11FIP3 and dynein intermediate chain DYNC1LI1; the interaction between RAB11A1 and RAB11FIP3 is direct; the complex regulates endocytic trafficking (By similarity). Interacts with EVI5; EVI5 and RAB11FIP3 may be mutually exclusive and compete for binding RAB11A (By similarity). Interacts with SGSM1, SGSM2, SGSM3 and VIPAS39 (By similarity). Interacts with EXOC6 in a GTP-dependent manner. Interacts with RAB11FIP5. Interacts with STXBP6. Interacts (GDP-bound form) with ZFYVE27 (By similarity). Interacts with BIRC6/bruce (By similarity). May interact with TBC1D14 (By similarity). Interacts with UNC119; in a cell cycle-dependent manner (By similarity). GDP-bound and nucleotide-free forms interact with SH3BP5 (By similarity). Interacts (GDP-bound form) with KIF5A in a ZFYVE27-dependent manner (By similarity). Interacts (GDP-bound form) with RELCH (By similarity). Found in a complex composed of RELCH, OSBP1 and RAB11A (By similarity). Interacts with TBC1D12 (By similarity). Interacts with DEF6 (By similarity). Interacts with ATP9A (By similarity). Forms a heterotetramer with RAB11FIP3; the GTP-bound form is preferred for binding. Forms a complex with Rabin8/RAB3IP and RAB11FIP3, probably a heterohexamer with two of each protein subunit, where Rabin8/RAB3IP and RAB11FIP3 simultaneously bind to RAB11A; the complex promotes preciliary trafficking and cilia growth. Forms a complex containing RAB11A, ASAP1, Rabin8/RAB3IP, RAP11FIP3 and ARF4; the complex promotes preciliary trafficking; the complex binds to RHO in photoreceptor cells and promotes RHO ciliary transport. Interacts (GTP-bound form) with WDR44; the interaction prevents RAB11A-RAB3IP-RAB11FIP3 complex formation (By similarity).</text>
</comment>
<comment type="subcellular location">
    <subcellularLocation>
        <location evidence="2">Cell membrane</location>
        <topology evidence="5">Lipid-anchor</topology>
    </subcellularLocation>
    <subcellularLocation>
        <location evidence="2">Endosome membrane</location>
    </subcellularLocation>
    <subcellularLocation>
        <location evidence="2">Recycling endosome membrane</location>
        <topology evidence="5">Lipid-anchor</topology>
    </subcellularLocation>
    <subcellularLocation>
        <location evidence="2">Cleavage furrow</location>
    </subcellularLocation>
    <subcellularLocation>
        <location evidence="2">Cytoplasmic vesicle</location>
        <location evidence="2">Phagosome</location>
    </subcellularLocation>
    <subcellularLocation>
        <location evidence="2">Cytoplasmic vesicle membrane</location>
    </subcellularLocation>
    <subcellularLocation>
        <location evidence="2">Golgi apparatus</location>
    </subcellularLocation>
    <subcellularLocation>
        <location evidence="2">Golgi apparatus</location>
        <location evidence="2">trans-Golgi network</location>
    </subcellularLocation>
    <subcellularLocation>
        <location evidence="2">Cytoplasmic vesicle</location>
    </subcellularLocation>
    <text evidence="2">Localized to WDR44-positive endosomes and tubules. Translocates with RAB11FIP2 from the vesicles of the endocytic recycling compartment (ERC) to the plasma membrane. Localizes to the cleavage furrow. During interphase, localized in vesicles continuously moving from peripheral sorting endosomes towards the pericentrosomal ERC. Colocalizes with PARD3, PRKCI, EXOC5, OCLN, PODXL and RAB8A in apical membrane initiation sites (AMIS) during the generation of apical surface and lumenogenesis. Localized to rhodopsin transport carriers when interacting with RAB11AFIP3 and ASAP1 in photoreceptors. Colocalizes with RAB11AFIP1 on punctate vesicles.</text>
</comment>
<comment type="domain">
    <text evidence="2">Switch 1, switch 2 and the interswitch regions are characteristic of Rab GTPases and mediate the interactions with Rab downstream effectors. The switch regions undergo conformational changes upon nucleotide binding which drives interaction with specific sets of effector proteins, with most effectors only binding to GTP-bound Rab.</text>
</comment>
<comment type="similarity">
    <text evidence="8">Belongs to the small GTPase superfamily. Rab family.</text>
</comment>
<gene>
    <name evidence="2" type="primary">RAB11A</name>
    <name evidence="2" type="synonym">RAB11</name>
</gene>
<reference key="1">
    <citation type="submission" date="2005-04" db="EMBL/GenBank/DDBJ databases">
        <authorList>
            <person name="Liu G.Y."/>
            <person name="Xiong Z.Y."/>
        </authorList>
    </citation>
    <scope>NUCLEOTIDE SEQUENCE [LARGE SCALE MRNA]</scope>
</reference>
<dbReference type="EC" id="3.6.5.2" evidence="4"/>
<dbReference type="EMBL" id="AY996814">
    <property type="protein sequence ID" value="AAY17510.1"/>
    <property type="molecule type" value="mRNA"/>
</dbReference>
<dbReference type="RefSeq" id="NP_001026958.1">
    <property type="nucleotide sequence ID" value="NM_001031788.1"/>
</dbReference>
<dbReference type="SMR" id="Q52NJ1"/>
<dbReference type="FunCoup" id="Q52NJ1">
    <property type="interactions" value="2387"/>
</dbReference>
<dbReference type="STRING" id="9823.ENSSSCP00000035788"/>
<dbReference type="PaxDb" id="9823-ENSSSCP00000022666"/>
<dbReference type="PeptideAtlas" id="Q52NJ1"/>
<dbReference type="Ensembl" id="ENSSSCT00000060675.2">
    <property type="protein sequence ID" value="ENSSSCP00000035788.1"/>
    <property type="gene ID" value="ENSSSCG00000032312.3"/>
</dbReference>
<dbReference type="Ensembl" id="ENSSSCT00015080698.1">
    <property type="protein sequence ID" value="ENSSSCP00015032625.1"/>
    <property type="gene ID" value="ENSSSCG00015060113.1"/>
</dbReference>
<dbReference type="Ensembl" id="ENSSSCT00025037726.1">
    <property type="protein sequence ID" value="ENSSSCP00025015852.1"/>
    <property type="gene ID" value="ENSSSCG00025027674.1"/>
</dbReference>
<dbReference type="Ensembl" id="ENSSSCT00030068285.1">
    <property type="protein sequence ID" value="ENSSSCP00030031217.1"/>
    <property type="gene ID" value="ENSSSCG00030048873.1"/>
</dbReference>
<dbReference type="Ensembl" id="ENSSSCT00035087642.1">
    <property type="protein sequence ID" value="ENSSSCP00035036591.1"/>
    <property type="gene ID" value="ENSSSCG00035065009.1"/>
</dbReference>
<dbReference type="Ensembl" id="ENSSSCT00040045792.1">
    <property type="protein sequence ID" value="ENSSSCP00040019199.1"/>
    <property type="gene ID" value="ENSSSCG00040033950.1"/>
</dbReference>
<dbReference type="Ensembl" id="ENSSSCT00045014500.1">
    <property type="protein sequence ID" value="ENSSSCP00045010054.1"/>
    <property type="gene ID" value="ENSSSCG00045008544.1"/>
</dbReference>
<dbReference type="Ensembl" id="ENSSSCT00050062280.1">
    <property type="protein sequence ID" value="ENSSSCP00050026743.1"/>
    <property type="gene ID" value="ENSSSCG00050045754.1"/>
</dbReference>
<dbReference type="Ensembl" id="ENSSSCT00055046066.1">
    <property type="protein sequence ID" value="ENSSSCP00055036735.1"/>
    <property type="gene ID" value="ENSSSCG00055023322.1"/>
</dbReference>
<dbReference type="Ensembl" id="ENSSSCT00060084873.1">
    <property type="protein sequence ID" value="ENSSSCP00060036728.1"/>
    <property type="gene ID" value="ENSSSCG00060062002.1"/>
</dbReference>
<dbReference type="Ensembl" id="ENSSSCT00065060823.1">
    <property type="protein sequence ID" value="ENSSSCP00065026341.1"/>
    <property type="gene ID" value="ENSSSCG00065044457.1"/>
</dbReference>
<dbReference type="Ensembl" id="ENSSSCT00070016375.1">
    <property type="protein sequence ID" value="ENSSSCP00070013559.1"/>
    <property type="gene ID" value="ENSSSCG00070008470.1"/>
</dbReference>
<dbReference type="Ensembl" id="ENSSSCT00090050994">
    <property type="protein sequence ID" value="ENSSSCP00090031799"/>
    <property type="gene ID" value="ENSSSCG00090028767"/>
</dbReference>
<dbReference type="Ensembl" id="ENSSSCT00105045057">
    <property type="protein sequence ID" value="ENSSSCP00105031276"/>
    <property type="gene ID" value="ENSSSCG00105023649"/>
</dbReference>
<dbReference type="Ensembl" id="ENSSSCT00110037218">
    <property type="protein sequence ID" value="ENSSSCP00110025591"/>
    <property type="gene ID" value="ENSSSCG00110019368"/>
</dbReference>
<dbReference type="Ensembl" id="ENSSSCT00115009459">
    <property type="protein sequence ID" value="ENSSSCP00115008886"/>
    <property type="gene ID" value="ENSSSCG00115005471"/>
</dbReference>
<dbReference type="Ensembl" id="ENSSSCT00130072577">
    <property type="protein sequence ID" value="ENSSSCP00130052285"/>
    <property type="gene ID" value="ENSSSCG00130037177"/>
</dbReference>
<dbReference type="GeneID" id="595117"/>
<dbReference type="KEGG" id="ssc:595117"/>
<dbReference type="CTD" id="8766"/>
<dbReference type="VGNC" id="VGNC:98236">
    <property type="gene designation" value="RAB11A"/>
</dbReference>
<dbReference type="eggNOG" id="KOG0087">
    <property type="taxonomic scope" value="Eukaryota"/>
</dbReference>
<dbReference type="GeneTree" id="ENSGT00940000154914"/>
<dbReference type="HOGENOM" id="CLU_041217_23_0_1"/>
<dbReference type="InParanoid" id="Q52NJ1"/>
<dbReference type="OMA" id="ITAIYQM"/>
<dbReference type="OrthoDB" id="9989112at2759"/>
<dbReference type="TreeFam" id="TF300099"/>
<dbReference type="Reactome" id="R-SSC-432040">
    <property type="pathway name" value="Vasopressin regulates renal water homeostasis via Aquaporins"/>
</dbReference>
<dbReference type="Reactome" id="R-SSC-5620912">
    <property type="pathway name" value="Anchoring of the basal body to the plasma membrane"/>
</dbReference>
<dbReference type="Reactome" id="R-SSC-5620916">
    <property type="pathway name" value="VxPx cargo-targeting to cilium"/>
</dbReference>
<dbReference type="Reactome" id="R-SSC-8854214">
    <property type="pathway name" value="TBC/RABGAPs"/>
</dbReference>
<dbReference type="Proteomes" id="UP000008227">
    <property type="component" value="Chromosome 1"/>
</dbReference>
<dbReference type="Proteomes" id="UP000314985">
    <property type="component" value="Chromosome 1"/>
</dbReference>
<dbReference type="Proteomes" id="UP000694570">
    <property type="component" value="Unplaced"/>
</dbReference>
<dbReference type="Proteomes" id="UP000694571">
    <property type="component" value="Unplaced"/>
</dbReference>
<dbReference type="Proteomes" id="UP000694720">
    <property type="component" value="Unplaced"/>
</dbReference>
<dbReference type="Proteomes" id="UP000694722">
    <property type="component" value="Unplaced"/>
</dbReference>
<dbReference type="Proteomes" id="UP000694723">
    <property type="component" value="Unplaced"/>
</dbReference>
<dbReference type="Proteomes" id="UP000694724">
    <property type="component" value="Unplaced"/>
</dbReference>
<dbReference type="Proteomes" id="UP000694725">
    <property type="component" value="Unplaced"/>
</dbReference>
<dbReference type="Proteomes" id="UP000694726">
    <property type="component" value="Unplaced"/>
</dbReference>
<dbReference type="Proteomes" id="UP000694727">
    <property type="component" value="Unplaced"/>
</dbReference>
<dbReference type="Proteomes" id="UP000694728">
    <property type="component" value="Unplaced"/>
</dbReference>
<dbReference type="Bgee" id="ENSSSCG00000032312">
    <property type="expression patterns" value="Expressed in oocyte and 44 other cell types or tissues"/>
</dbReference>
<dbReference type="ExpressionAtlas" id="Q52NJ1">
    <property type="expression patterns" value="baseline and differential"/>
</dbReference>
<dbReference type="GO" id="GO:0005814">
    <property type="term" value="C:centriole"/>
    <property type="evidence" value="ECO:0007669"/>
    <property type="project" value="Ensembl"/>
</dbReference>
<dbReference type="GO" id="GO:0005813">
    <property type="term" value="C:centrosome"/>
    <property type="evidence" value="ECO:0000250"/>
    <property type="project" value="UniProtKB"/>
</dbReference>
<dbReference type="GO" id="GO:0032154">
    <property type="term" value="C:cleavage furrow"/>
    <property type="evidence" value="ECO:0000250"/>
    <property type="project" value="UniProtKB"/>
</dbReference>
<dbReference type="GO" id="GO:0005829">
    <property type="term" value="C:cytosol"/>
    <property type="evidence" value="ECO:0000250"/>
    <property type="project" value="UniProtKB"/>
</dbReference>
<dbReference type="GO" id="GO:0030666">
    <property type="term" value="C:endocytic vesicle membrane"/>
    <property type="evidence" value="ECO:0000250"/>
    <property type="project" value="UniProtKB"/>
</dbReference>
<dbReference type="GO" id="GO:0070062">
    <property type="term" value="C:extracellular exosome"/>
    <property type="evidence" value="ECO:0007669"/>
    <property type="project" value="Ensembl"/>
</dbReference>
<dbReference type="GO" id="GO:0098978">
    <property type="term" value="C:glutamatergic synapse"/>
    <property type="evidence" value="ECO:0007669"/>
    <property type="project" value="Ensembl"/>
</dbReference>
<dbReference type="GO" id="GO:0005794">
    <property type="term" value="C:Golgi apparatus"/>
    <property type="evidence" value="ECO:0000318"/>
    <property type="project" value="GO_Central"/>
</dbReference>
<dbReference type="GO" id="GO:0000139">
    <property type="term" value="C:Golgi membrane"/>
    <property type="evidence" value="ECO:0000250"/>
    <property type="project" value="UniProtKB"/>
</dbReference>
<dbReference type="GO" id="GO:0005828">
    <property type="term" value="C:kinetochore microtubule"/>
    <property type="evidence" value="ECO:0007669"/>
    <property type="project" value="Ensembl"/>
</dbReference>
<dbReference type="GO" id="GO:0005771">
    <property type="term" value="C:multivesicular body"/>
    <property type="evidence" value="ECO:0007669"/>
    <property type="project" value="Ensembl"/>
</dbReference>
<dbReference type="GO" id="GO:0045335">
    <property type="term" value="C:phagocytic vesicle"/>
    <property type="evidence" value="ECO:0000250"/>
    <property type="project" value="UniProtKB"/>
</dbReference>
<dbReference type="GO" id="GO:0098837">
    <property type="term" value="C:postsynaptic recycling endosome"/>
    <property type="evidence" value="ECO:0000318"/>
    <property type="project" value="GO_Central"/>
</dbReference>
<dbReference type="GO" id="GO:0032991">
    <property type="term" value="C:protein-containing complex"/>
    <property type="evidence" value="ECO:0007669"/>
    <property type="project" value="Ensembl"/>
</dbReference>
<dbReference type="GO" id="GO:0055037">
    <property type="term" value="C:recycling endosome"/>
    <property type="evidence" value="ECO:0000250"/>
    <property type="project" value="UniProtKB"/>
</dbReference>
<dbReference type="GO" id="GO:0055038">
    <property type="term" value="C:recycling endosome membrane"/>
    <property type="evidence" value="ECO:0007669"/>
    <property type="project" value="UniProtKB-SubCell"/>
</dbReference>
<dbReference type="GO" id="GO:0000922">
    <property type="term" value="C:spindle pole"/>
    <property type="evidence" value="ECO:0007669"/>
    <property type="project" value="Ensembl"/>
</dbReference>
<dbReference type="GO" id="GO:0005802">
    <property type="term" value="C:trans-Golgi network"/>
    <property type="evidence" value="ECO:0000250"/>
    <property type="project" value="UniProtKB"/>
</dbReference>
<dbReference type="GO" id="GO:0032588">
    <property type="term" value="C:trans-Golgi network membrane"/>
    <property type="evidence" value="ECO:0000250"/>
    <property type="project" value="UniProtKB"/>
</dbReference>
<dbReference type="GO" id="GO:0030133">
    <property type="term" value="C:transport vesicle"/>
    <property type="evidence" value="ECO:0000318"/>
    <property type="project" value="GO_Central"/>
</dbReference>
<dbReference type="GO" id="GO:0051959">
    <property type="term" value="F:dynein light intermediate chain binding"/>
    <property type="evidence" value="ECO:0000250"/>
    <property type="project" value="UniProtKB"/>
</dbReference>
<dbReference type="GO" id="GO:0003925">
    <property type="term" value="F:G protein activity"/>
    <property type="evidence" value="ECO:0007669"/>
    <property type="project" value="UniProtKB-EC"/>
</dbReference>
<dbReference type="GO" id="GO:0005525">
    <property type="term" value="F:GTP binding"/>
    <property type="evidence" value="ECO:0000318"/>
    <property type="project" value="GO_Central"/>
</dbReference>
<dbReference type="GO" id="GO:0003924">
    <property type="term" value="F:GTPase activity"/>
    <property type="evidence" value="ECO:0000250"/>
    <property type="project" value="UniProtKB"/>
</dbReference>
<dbReference type="GO" id="GO:0008017">
    <property type="term" value="F:microtubule binding"/>
    <property type="evidence" value="ECO:0007669"/>
    <property type="project" value="Ensembl"/>
</dbReference>
<dbReference type="GO" id="GO:0031489">
    <property type="term" value="F:myosin V binding"/>
    <property type="evidence" value="ECO:0007669"/>
    <property type="project" value="Ensembl"/>
</dbReference>
<dbReference type="GO" id="GO:0150093">
    <property type="term" value="P:amyloid-beta clearance by transcytosis"/>
    <property type="evidence" value="ECO:0007669"/>
    <property type="project" value="Ensembl"/>
</dbReference>
<dbReference type="GO" id="GO:0030953">
    <property type="term" value="P:astral microtubule organization"/>
    <property type="evidence" value="ECO:0007669"/>
    <property type="project" value="Ensembl"/>
</dbReference>
<dbReference type="GO" id="GO:0061502">
    <property type="term" value="P:early endosome to recycling endosome transport"/>
    <property type="evidence" value="ECO:0007669"/>
    <property type="project" value="Ensembl"/>
</dbReference>
<dbReference type="GO" id="GO:0072594">
    <property type="term" value="P:establishment of protein localization to organelle"/>
    <property type="evidence" value="ECO:0007669"/>
    <property type="project" value="Ensembl"/>
</dbReference>
<dbReference type="GO" id="GO:0006887">
    <property type="term" value="P:exocytosis"/>
    <property type="evidence" value="ECO:0000318"/>
    <property type="project" value="GO_Central"/>
</dbReference>
<dbReference type="GO" id="GO:1990182">
    <property type="term" value="P:exosomal secretion"/>
    <property type="evidence" value="ECO:0007669"/>
    <property type="project" value="Ensembl"/>
</dbReference>
<dbReference type="GO" id="GO:0032367">
    <property type="term" value="P:intracellular cholesterol transport"/>
    <property type="evidence" value="ECO:0000250"/>
    <property type="project" value="UniProtKB"/>
</dbReference>
<dbReference type="GO" id="GO:0032402">
    <property type="term" value="P:melanosome transport"/>
    <property type="evidence" value="ECO:0000250"/>
    <property type="project" value="UniProtKB"/>
</dbReference>
<dbReference type="GO" id="GO:0007080">
    <property type="term" value="P:mitotic metaphase chromosome alignment"/>
    <property type="evidence" value="ECO:0007669"/>
    <property type="project" value="Ensembl"/>
</dbReference>
<dbReference type="GO" id="GO:0090307">
    <property type="term" value="P:mitotic spindle assembly"/>
    <property type="evidence" value="ECO:0007669"/>
    <property type="project" value="Ensembl"/>
</dbReference>
<dbReference type="GO" id="GO:0036258">
    <property type="term" value="P:multivesicular body assembly"/>
    <property type="evidence" value="ECO:0007669"/>
    <property type="project" value="Ensembl"/>
</dbReference>
<dbReference type="GO" id="GO:0031175">
    <property type="term" value="P:neuron projection development"/>
    <property type="evidence" value="ECO:0000250"/>
    <property type="project" value="UniProtKB"/>
</dbReference>
<dbReference type="GO" id="GO:0098887">
    <property type="term" value="P:neurotransmitter receptor transport, endosome to postsynaptic membrane"/>
    <property type="evidence" value="ECO:0000318"/>
    <property type="project" value="GO_Central"/>
</dbReference>
<dbReference type="GO" id="GO:0010634">
    <property type="term" value="P:positive regulation of epithelial cell migration"/>
    <property type="evidence" value="ECO:0007669"/>
    <property type="project" value="Ensembl"/>
</dbReference>
<dbReference type="GO" id="GO:0010971">
    <property type="term" value="P:positive regulation of G2/M transition of mitotic cell cycle"/>
    <property type="evidence" value="ECO:0007669"/>
    <property type="project" value="Ensembl"/>
</dbReference>
<dbReference type="GO" id="GO:1903438">
    <property type="term" value="P:positive regulation of mitotic cytokinetic process"/>
    <property type="evidence" value="ECO:0007669"/>
    <property type="project" value="Ensembl"/>
</dbReference>
<dbReference type="GO" id="GO:0034394">
    <property type="term" value="P:protein localization to cell surface"/>
    <property type="evidence" value="ECO:0007669"/>
    <property type="project" value="Ensembl"/>
</dbReference>
<dbReference type="GO" id="GO:0061512">
    <property type="term" value="P:protein localization to cilium"/>
    <property type="evidence" value="ECO:0000250"/>
    <property type="project" value="UniProtKB"/>
</dbReference>
<dbReference type="GO" id="GO:0072659">
    <property type="term" value="P:protein localization to plasma membrane"/>
    <property type="evidence" value="ECO:0000250"/>
    <property type="project" value="UniProtKB"/>
</dbReference>
<dbReference type="GO" id="GO:0071806">
    <property type="term" value="P:protein transmembrane transport"/>
    <property type="evidence" value="ECO:0007669"/>
    <property type="project" value="Ensembl"/>
</dbReference>
<dbReference type="GO" id="GO:1902017">
    <property type="term" value="P:regulation of cilium assembly"/>
    <property type="evidence" value="ECO:0000250"/>
    <property type="project" value="UniProtKB"/>
</dbReference>
<dbReference type="GO" id="GO:1902954">
    <property type="term" value="P:regulation of early endosome to recycling endosome transport"/>
    <property type="evidence" value="ECO:0000250"/>
    <property type="project" value="UniProtKB"/>
</dbReference>
<dbReference type="GO" id="GO:2001135">
    <property type="term" value="P:regulation of endocytic recycling"/>
    <property type="evidence" value="ECO:0000250"/>
    <property type="project" value="UniProtKB"/>
</dbReference>
<dbReference type="GO" id="GO:1904779">
    <property type="term" value="P:regulation of protein localization to centrosome"/>
    <property type="evidence" value="ECO:0000250"/>
    <property type="project" value="UniProtKB"/>
</dbReference>
<dbReference type="CDD" id="cd01868">
    <property type="entry name" value="Rab11_like"/>
    <property type="match status" value="1"/>
</dbReference>
<dbReference type="FunFam" id="3.40.50.300:FF:000085">
    <property type="entry name" value="Putative ras-related protein rab-11a"/>
    <property type="match status" value="1"/>
</dbReference>
<dbReference type="Gene3D" id="3.40.50.300">
    <property type="entry name" value="P-loop containing nucleotide triphosphate hydrolases"/>
    <property type="match status" value="1"/>
</dbReference>
<dbReference type="InterPro" id="IPR027417">
    <property type="entry name" value="P-loop_NTPase"/>
</dbReference>
<dbReference type="InterPro" id="IPR050209">
    <property type="entry name" value="Rab_GTPases_membrane_traffic"/>
</dbReference>
<dbReference type="InterPro" id="IPR005225">
    <property type="entry name" value="Small_GTP-bd"/>
</dbReference>
<dbReference type="InterPro" id="IPR001806">
    <property type="entry name" value="Small_GTPase"/>
</dbReference>
<dbReference type="NCBIfam" id="TIGR00231">
    <property type="entry name" value="small_GTP"/>
    <property type="match status" value="1"/>
</dbReference>
<dbReference type="PANTHER" id="PTHR47979">
    <property type="entry name" value="DRAB11-RELATED"/>
    <property type="match status" value="1"/>
</dbReference>
<dbReference type="Pfam" id="PF00071">
    <property type="entry name" value="Ras"/>
    <property type="match status" value="1"/>
</dbReference>
<dbReference type="PRINTS" id="PR00449">
    <property type="entry name" value="RASTRNSFRMNG"/>
</dbReference>
<dbReference type="SMART" id="SM00175">
    <property type="entry name" value="RAB"/>
    <property type="match status" value="1"/>
</dbReference>
<dbReference type="SMART" id="SM00176">
    <property type="entry name" value="RAN"/>
    <property type="match status" value="1"/>
</dbReference>
<dbReference type="SMART" id="SM00173">
    <property type="entry name" value="RAS"/>
    <property type="match status" value="1"/>
</dbReference>
<dbReference type="SMART" id="SM00174">
    <property type="entry name" value="RHO"/>
    <property type="match status" value="1"/>
</dbReference>
<dbReference type="SUPFAM" id="SSF52540">
    <property type="entry name" value="P-loop containing nucleoside triphosphate hydrolases"/>
    <property type="match status" value="1"/>
</dbReference>
<dbReference type="PROSITE" id="PS51419">
    <property type="entry name" value="RAB"/>
    <property type="match status" value="1"/>
</dbReference>
<evidence type="ECO:0000250" key="1">
    <source>
        <dbReference type="UniProtKB" id="P62490"/>
    </source>
</evidence>
<evidence type="ECO:0000250" key="2">
    <source>
        <dbReference type="UniProtKB" id="P62491"/>
    </source>
</evidence>
<evidence type="ECO:0000250" key="3">
    <source>
        <dbReference type="UniProtKB" id="P62492"/>
    </source>
</evidence>
<evidence type="ECO:0000250" key="4">
    <source>
        <dbReference type="UniProtKB" id="P62493"/>
    </source>
</evidence>
<evidence type="ECO:0000250" key="5">
    <source>
        <dbReference type="UniProtKB" id="P62494"/>
    </source>
</evidence>
<evidence type="ECO:0000255" key="6"/>
<evidence type="ECO:0000256" key="7">
    <source>
        <dbReference type="SAM" id="MobiDB-lite"/>
    </source>
</evidence>
<evidence type="ECO:0000305" key="8"/>
<organism>
    <name type="scientific">Sus scrofa</name>
    <name type="common">Pig</name>
    <dbReference type="NCBI Taxonomy" id="9823"/>
    <lineage>
        <taxon>Eukaryota</taxon>
        <taxon>Metazoa</taxon>
        <taxon>Chordata</taxon>
        <taxon>Craniata</taxon>
        <taxon>Vertebrata</taxon>
        <taxon>Euteleostomi</taxon>
        <taxon>Mammalia</taxon>
        <taxon>Eutheria</taxon>
        <taxon>Laurasiatheria</taxon>
        <taxon>Artiodactyla</taxon>
        <taxon>Suina</taxon>
        <taxon>Suidae</taxon>
        <taxon>Sus</taxon>
    </lineage>
</organism>
<keyword id="KW-0007">Acetylation</keyword>
<keyword id="KW-0131">Cell cycle</keyword>
<keyword id="KW-1003">Cell membrane</keyword>
<keyword id="KW-0968">Cytoplasmic vesicle</keyword>
<keyword id="KW-0967">Endosome</keyword>
<keyword id="KW-0333">Golgi apparatus</keyword>
<keyword id="KW-0342">GTP-binding</keyword>
<keyword id="KW-0378">Hydrolase</keyword>
<keyword id="KW-0449">Lipoprotein</keyword>
<keyword id="KW-0460">Magnesium</keyword>
<keyword id="KW-0472">Membrane</keyword>
<keyword id="KW-0479">Metal-binding</keyword>
<keyword id="KW-0488">Methylation</keyword>
<keyword id="KW-0547">Nucleotide-binding</keyword>
<keyword id="KW-0636">Prenylation</keyword>
<keyword id="KW-0653">Protein transport</keyword>
<keyword id="KW-1185">Reference proteome</keyword>
<keyword id="KW-0813">Transport</keyword>
<accession>Q52NJ1</accession>
<feature type="initiator methionine" description="Removed" evidence="2">
    <location>
        <position position="1"/>
    </location>
</feature>
<feature type="chain" id="PRO_0000121153" description="Ras-related protein Rab-11A">
    <location>
        <begin position="2"/>
        <end position="213"/>
    </location>
</feature>
<feature type="propeptide" id="PRO_0000370809" description="Removed in mature form" evidence="6">
    <location>
        <begin position="214"/>
        <end position="216"/>
    </location>
</feature>
<feature type="region of interest" description="Disordered" evidence="7">
    <location>
        <begin position="183"/>
        <end position="211"/>
    </location>
</feature>
<feature type="short sequence motif" description="Switch 1" evidence="2">
    <location>
        <begin position="36"/>
        <end position="47"/>
    </location>
</feature>
<feature type="short sequence motif" description="Switch 2" evidence="2">
    <location>
        <begin position="67"/>
        <end position="86"/>
    </location>
</feature>
<feature type="binding site" evidence="2">
    <location>
        <position position="20"/>
    </location>
    <ligand>
        <name>GTP</name>
        <dbReference type="ChEBI" id="CHEBI:37565"/>
    </ligand>
</feature>
<feature type="binding site" evidence="2">
    <location>
        <position position="21"/>
    </location>
    <ligand>
        <name>GTP</name>
        <dbReference type="ChEBI" id="CHEBI:37565"/>
    </ligand>
</feature>
<feature type="binding site" evidence="2">
    <location>
        <position position="22"/>
    </location>
    <ligand>
        <name>GTP</name>
        <dbReference type="ChEBI" id="CHEBI:37565"/>
    </ligand>
</feature>
<feature type="binding site" evidence="2">
    <location>
        <position position="23"/>
    </location>
    <ligand>
        <name>GTP</name>
        <dbReference type="ChEBI" id="CHEBI:37565"/>
    </ligand>
</feature>
<feature type="binding site" evidence="2">
    <location>
        <position position="24"/>
    </location>
    <ligand>
        <name>GTP</name>
        <dbReference type="ChEBI" id="CHEBI:37565"/>
    </ligand>
</feature>
<feature type="binding site" evidence="2">
    <location>
        <position position="25"/>
    </location>
    <ligand>
        <name>GTP</name>
        <dbReference type="ChEBI" id="CHEBI:37565"/>
    </ligand>
</feature>
<feature type="binding site" evidence="2">
    <location>
        <position position="25"/>
    </location>
    <ligand>
        <name>Mg(2+)</name>
        <dbReference type="ChEBI" id="CHEBI:18420"/>
    </ligand>
</feature>
<feature type="binding site" evidence="2">
    <location>
        <position position="26"/>
    </location>
    <ligand>
        <name>GTP</name>
        <dbReference type="ChEBI" id="CHEBI:37565"/>
    </ligand>
</feature>
<feature type="binding site" evidence="2">
    <location>
        <position position="37"/>
    </location>
    <ligand>
        <name>GTP</name>
        <dbReference type="ChEBI" id="CHEBI:37565"/>
    </ligand>
</feature>
<feature type="binding site" evidence="2">
    <location>
        <position position="38"/>
    </location>
    <ligand>
        <name>GTP</name>
        <dbReference type="ChEBI" id="CHEBI:37565"/>
    </ligand>
</feature>
<feature type="binding site" evidence="2">
    <location>
        <position position="40"/>
    </location>
    <ligand>
        <name>GTP</name>
        <dbReference type="ChEBI" id="CHEBI:37565"/>
    </ligand>
</feature>
<feature type="binding site" evidence="2">
    <location>
        <position position="42"/>
    </location>
    <ligand>
        <name>GTP</name>
        <dbReference type="ChEBI" id="CHEBI:37565"/>
    </ligand>
</feature>
<feature type="binding site" evidence="2">
    <location>
        <position position="43"/>
    </location>
    <ligand>
        <name>GTP</name>
        <dbReference type="ChEBI" id="CHEBI:37565"/>
    </ligand>
</feature>
<feature type="binding site" evidence="2">
    <location>
        <position position="43"/>
    </location>
    <ligand>
        <name>Mg(2+)</name>
        <dbReference type="ChEBI" id="CHEBI:18420"/>
    </ligand>
</feature>
<feature type="binding site" evidence="2">
    <location>
        <position position="66"/>
    </location>
    <ligand>
        <name>Mg(2+)</name>
        <dbReference type="ChEBI" id="CHEBI:18420"/>
    </ligand>
</feature>
<feature type="binding site" evidence="2">
    <location>
        <position position="69"/>
    </location>
    <ligand>
        <name>GTP</name>
        <dbReference type="ChEBI" id="CHEBI:37565"/>
    </ligand>
</feature>
<feature type="binding site" evidence="2">
    <location>
        <position position="124"/>
    </location>
    <ligand>
        <name>GTP</name>
        <dbReference type="ChEBI" id="CHEBI:37565"/>
    </ligand>
</feature>
<feature type="binding site" evidence="2">
    <location>
        <position position="125"/>
    </location>
    <ligand>
        <name>GTP</name>
        <dbReference type="ChEBI" id="CHEBI:37565"/>
    </ligand>
</feature>
<feature type="binding site" evidence="2">
    <location>
        <position position="127"/>
    </location>
    <ligand>
        <name>GTP</name>
        <dbReference type="ChEBI" id="CHEBI:37565"/>
    </ligand>
</feature>
<feature type="binding site" evidence="2">
    <location>
        <position position="155"/>
    </location>
    <ligand>
        <name>GTP</name>
        <dbReference type="ChEBI" id="CHEBI:37565"/>
    </ligand>
</feature>
<feature type="binding site" evidence="2">
    <location>
        <position position="156"/>
    </location>
    <ligand>
        <name>GTP</name>
        <dbReference type="ChEBI" id="CHEBI:37565"/>
    </ligand>
</feature>
<feature type="modified residue" description="N-acetylglycine" evidence="2">
    <location>
        <position position="2"/>
    </location>
</feature>
<feature type="modified residue" description="Cysteine methyl ester" evidence="6">
    <location>
        <position position="213"/>
    </location>
</feature>
<feature type="lipid moiety-binding region" description="S-geranylgeranyl cysteine" evidence="2">
    <location>
        <position position="212"/>
    </location>
</feature>
<feature type="lipid moiety-binding region" description="S-geranylgeranyl cysteine" evidence="2">
    <location>
        <position position="213"/>
    </location>
</feature>